<protein>
    <recommendedName>
        <fullName>Probable beta-glucosidase J</fullName>
        <ecNumber>3.2.1.21</ecNumber>
    </recommendedName>
    <alternativeName>
        <fullName>Beta-D-glucoside glucohydrolase J</fullName>
    </alternativeName>
    <alternativeName>
        <fullName>Cellobiase J</fullName>
    </alternativeName>
    <alternativeName>
        <fullName>Gentiobiase J</fullName>
    </alternativeName>
</protein>
<sequence length="850" mass="92696">MYRQEATTVTILAQAPPNWPAPAFDISGFTSAFRPSRRAQRSNTTMGSIDTNSTDAWHTFAIPRLGIPAMRITDGPNGARGTRYFNGVPSACLPCGTALGATFDTDLLFKLGRLLAAECKAKGAHVLLGPTINIQRGPLGGRGFESFSEDPVLSGNSAASYCAGVKDLGIVPTLKHLVCNDQEHERIAVSAMVTERALREIYLMPFQLAIKNARPGALMTSYNKVNGLHASEDPGLLNHIIRKEWGFEGLIMSDWFGTYSVASAVNAGLDLEMPGPTRFRGPALMHALTSNKVSEKTLDDRVRKVLELVQLTSRAGIPEYAPAQKLDRVEDRVLLRQAAADSIVLLKNANEVLPLDPRKKTLVIGPNADIAAYCGGGSASLLAYYTVTPRQGIAEKCEEVVFSQGCYGHKELPLLGDHLKTETGERGYTFRVYTEPATYEDRQPVDVLHMTNSCAFLMDYSHPKISGDTYYATLEGRFEPTESGVYELGLTVAGTGLLYIDGELVIDNKTKQRHGTSFFGIGTVEERGERYLEAGRQHHVFVEYSTAPTSNLKHHGVVSFGPGGVRLGGCRKLDAETAIKQAVQLAAETEQVVVCVGMNGNWESEGFDRPHMDLPPGTDNLVRAVIEAQPNAVIVVQSGTPVTMPWADQAKALVQAWYGGSEGGNGIADVLFGDVNPSAKLPLTFPRDIAHNPSYLSYRSERGRVLYSEDVYVGYRYYDKVKQAPLFHFGHGLSYTTFKLSGLNVQETDPQASDISAEVVQIYVRPPTTASVGRPVRELKGYEKTMLHPGETKEISVTVPMGVATSFWDEGRSAWLSEKGTYAIEVVGTGERNMLSAPLCVQVSRYWNGL</sequence>
<accession>Q5AV15</accession>
<accession>C8V7D6</accession>
<keyword id="KW-0119">Carbohydrate metabolism</keyword>
<keyword id="KW-0136">Cellulose degradation</keyword>
<keyword id="KW-0325">Glycoprotein</keyword>
<keyword id="KW-0326">Glycosidase</keyword>
<keyword id="KW-0378">Hydrolase</keyword>
<keyword id="KW-0624">Polysaccharide degradation</keyword>
<keyword id="KW-1185">Reference proteome</keyword>
<keyword id="KW-0964">Secreted</keyword>
<comment type="function">
    <text evidence="1">Beta-glucosidases are one of a number of cellulolytic enzymes involved in the degradation of cellulosic biomass. Catalyzes the last step releasing glucose from the inhibitory cellobiose (By similarity).</text>
</comment>
<comment type="catalytic activity">
    <reaction>
        <text>Hydrolysis of terminal, non-reducing beta-D-glucosyl residues with release of beta-D-glucose.</text>
        <dbReference type="EC" id="3.2.1.21"/>
    </reaction>
</comment>
<comment type="pathway">
    <text>Glycan metabolism; cellulose degradation.</text>
</comment>
<comment type="subcellular location">
    <subcellularLocation>
        <location evidence="1">Secreted</location>
    </subcellularLocation>
</comment>
<comment type="similarity">
    <text evidence="4">Belongs to the glycosyl hydrolase 3 family.</text>
</comment>
<evidence type="ECO:0000250" key="1"/>
<evidence type="ECO:0000255" key="2"/>
<evidence type="ECO:0000255" key="3">
    <source>
        <dbReference type="PROSITE-ProRule" id="PRU01164"/>
    </source>
</evidence>
<evidence type="ECO:0000305" key="4"/>
<organism>
    <name type="scientific">Emericella nidulans (strain FGSC A4 / ATCC 38163 / CBS 112.46 / NRRL 194 / M139)</name>
    <name type="common">Aspergillus nidulans</name>
    <dbReference type="NCBI Taxonomy" id="227321"/>
    <lineage>
        <taxon>Eukaryota</taxon>
        <taxon>Fungi</taxon>
        <taxon>Dikarya</taxon>
        <taxon>Ascomycota</taxon>
        <taxon>Pezizomycotina</taxon>
        <taxon>Eurotiomycetes</taxon>
        <taxon>Eurotiomycetidae</taxon>
        <taxon>Eurotiales</taxon>
        <taxon>Aspergillaceae</taxon>
        <taxon>Aspergillus</taxon>
        <taxon>Aspergillus subgen. Nidulantes</taxon>
    </lineage>
</organism>
<reference key="1">
    <citation type="journal article" date="2005" name="Nature">
        <title>Sequencing of Aspergillus nidulans and comparative analysis with A. fumigatus and A. oryzae.</title>
        <authorList>
            <person name="Galagan J.E."/>
            <person name="Calvo S.E."/>
            <person name="Cuomo C."/>
            <person name="Ma L.-J."/>
            <person name="Wortman J.R."/>
            <person name="Batzoglou S."/>
            <person name="Lee S.-I."/>
            <person name="Bastuerkmen M."/>
            <person name="Spevak C.C."/>
            <person name="Clutterbuck J."/>
            <person name="Kapitonov V."/>
            <person name="Jurka J."/>
            <person name="Scazzocchio C."/>
            <person name="Farman M.L."/>
            <person name="Butler J."/>
            <person name="Purcell S."/>
            <person name="Harris S."/>
            <person name="Braus G.H."/>
            <person name="Draht O."/>
            <person name="Busch S."/>
            <person name="D'Enfert C."/>
            <person name="Bouchier C."/>
            <person name="Goldman G.H."/>
            <person name="Bell-Pedersen D."/>
            <person name="Griffiths-Jones S."/>
            <person name="Doonan J.H."/>
            <person name="Yu J."/>
            <person name="Vienken K."/>
            <person name="Pain A."/>
            <person name="Freitag M."/>
            <person name="Selker E.U."/>
            <person name="Archer D.B."/>
            <person name="Penalva M.A."/>
            <person name="Oakley B.R."/>
            <person name="Momany M."/>
            <person name="Tanaka T."/>
            <person name="Kumagai T."/>
            <person name="Asai K."/>
            <person name="Machida M."/>
            <person name="Nierman W.C."/>
            <person name="Denning D.W."/>
            <person name="Caddick M.X."/>
            <person name="Hynes M."/>
            <person name="Paoletti M."/>
            <person name="Fischer R."/>
            <person name="Miller B.L."/>
            <person name="Dyer P.S."/>
            <person name="Sachs M.S."/>
            <person name="Osmani S.A."/>
            <person name="Birren B.W."/>
        </authorList>
    </citation>
    <scope>NUCLEOTIDE SEQUENCE [LARGE SCALE GENOMIC DNA]</scope>
    <source>
        <strain>FGSC A4 / ATCC 38163 / CBS 112.46 / NRRL 194 / M139</strain>
    </source>
</reference>
<reference key="2">
    <citation type="journal article" date="2009" name="Fungal Genet. Biol.">
        <title>The 2008 update of the Aspergillus nidulans genome annotation: a community effort.</title>
        <authorList>
            <person name="Wortman J.R."/>
            <person name="Gilsenan J.M."/>
            <person name="Joardar V."/>
            <person name="Deegan J."/>
            <person name="Clutterbuck J."/>
            <person name="Andersen M.R."/>
            <person name="Archer D."/>
            <person name="Bencina M."/>
            <person name="Braus G."/>
            <person name="Coutinho P."/>
            <person name="von Dohren H."/>
            <person name="Doonan J."/>
            <person name="Driessen A.J."/>
            <person name="Durek P."/>
            <person name="Espeso E."/>
            <person name="Fekete E."/>
            <person name="Flipphi M."/>
            <person name="Estrada C.G."/>
            <person name="Geysens S."/>
            <person name="Goldman G."/>
            <person name="de Groot P.W."/>
            <person name="Hansen K."/>
            <person name="Harris S.D."/>
            <person name="Heinekamp T."/>
            <person name="Helmstaedt K."/>
            <person name="Henrissat B."/>
            <person name="Hofmann G."/>
            <person name="Homan T."/>
            <person name="Horio T."/>
            <person name="Horiuchi H."/>
            <person name="James S."/>
            <person name="Jones M."/>
            <person name="Karaffa L."/>
            <person name="Karanyi Z."/>
            <person name="Kato M."/>
            <person name="Keller N."/>
            <person name="Kelly D.E."/>
            <person name="Kiel J.A."/>
            <person name="Kim J.M."/>
            <person name="van der Klei I.J."/>
            <person name="Klis F.M."/>
            <person name="Kovalchuk A."/>
            <person name="Krasevec N."/>
            <person name="Kubicek C.P."/>
            <person name="Liu B."/>
            <person name="Maccabe A."/>
            <person name="Meyer V."/>
            <person name="Mirabito P."/>
            <person name="Miskei M."/>
            <person name="Mos M."/>
            <person name="Mullins J."/>
            <person name="Nelson D.R."/>
            <person name="Nielsen J."/>
            <person name="Oakley B.R."/>
            <person name="Osmani S.A."/>
            <person name="Pakula T."/>
            <person name="Paszewski A."/>
            <person name="Paulsen I."/>
            <person name="Pilsyk S."/>
            <person name="Pocsi I."/>
            <person name="Punt P.J."/>
            <person name="Ram A.F."/>
            <person name="Ren Q."/>
            <person name="Robellet X."/>
            <person name="Robson G."/>
            <person name="Seiboth B."/>
            <person name="van Solingen P."/>
            <person name="Specht T."/>
            <person name="Sun J."/>
            <person name="Taheri-Talesh N."/>
            <person name="Takeshita N."/>
            <person name="Ussery D."/>
            <person name="vanKuyk P.A."/>
            <person name="Visser H."/>
            <person name="van de Vondervoort P.J."/>
            <person name="de Vries R.P."/>
            <person name="Walton J."/>
            <person name="Xiang X."/>
            <person name="Xiong Y."/>
            <person name="Zeng A.P."/>
            <person name="Brandt B.W."/>
            <person name="Cornell M.J."/>
            <person name="van den Hondel C.A."/>
            <person name="Visser J."/>
            <person name="Oliver S.G."/>
            <person name="Turner G."/>
        </authorList>
    </citation>
    <scope>GENOME REANNOTATION</scope>
    <source>
        <strain>FGSC A4 / ATCC 38163 / CBS 112.46 / NRRL 194 / M139</strain>
    </source>
</reference>
<name>BGLJ_EMENI</name>
<feature type="chain" id="PRO_0000394894" description="Probable beta-glucosidase J">
    <location>
        <begin position="1"/>
        <end position="850"/>
    </location>
</feature>
<feature type="domain" description="PA14" evidence="3">
    <location>
        <begin position="423"/>
        <end position="583"/>
    </location>
</feature>
<feature type="active site" evidence="1">
    <location>
        <position position="254"/>
    </location>
</feature>
<feature type="glycosylation site" description="N-linked (GlcNAc...) asparagine" evidence="2">
    <location>
        <position position="43"/>
    </location>
</feature>
<feature type="glycosylation site" description="N-linked (GlcNAc...) asparagine" evidence="2">
    <location>
        <position position="52"/>
    </location>
</feature>
<feature type="glycosylation site" description="N-linked (GlcNAc...) asparagine" evidence="2">
    <location>
        <position position="508"/>
    </location>
</feature>
<proteinExistence type="inferred from homology"/>
<dbReference type="EC" id="3.2.1.21"/>
<dbReference type="EMBL" id="AACD01000134">
    <property type="protein sequence ID" value="EAA58910.1"/>
    <property type="molecule type" value="Genomic_DNA"/>
</dbReference>
<dbReference type="EMBL" id="BN001302">
    <property type="protein sequence ID" value="CBF73413.1"/>
    <property type="molecule type" value="Genomic_DNA"/>
</dbReference>
<dbReference type="RefSeq" id="XP_681134.1">
    <property type="nucleotide sequence ID" value="XM_676042.1"/>
</dbReference>
<dbReference type="SMR" id="Q5AV15"/>
<dbReference type="STRING" id="227321.Q5AV15"/>
<dbReference type="CAZy" id="GH3">
    <property type="family name" value="Glycoside Hydrolase Family 3"/>
</dbReference>
<dbReference type="GlyCosmos" id="Q5AV15">
    <property type="glycosylation" value="3 sites, No reported glycans"/>
</dbReference>
<dbReference type="EnsemblFungi" id="CBF73413">
    <property type="protein sequence ID" value="CBF73413"/>
    <property type="gene ID" value="ANIA_07865"/>
</dbReference>
<dbReference type="KEGG" id="ani:ANIA_07865"/>
<dbReference type="eggNOG" id="ENOG502QR4D">
    <property type="taxonomic scope" value="Eukaryota"/>
</dbReference>
<dbReference type="HOGENOM" id="CLU_004542_4_0_1"/>
<dbReference type="InParanoid" id="Q5AV15"/>
<dbReference type="OMA" id="SQGCYGH"/>
<dbReference type="OrthoDB" id="47059at2759"/>
<dbReference type="UniPathway" id="UPA00696"/>
<dbReference type="Proteomes" id="UP000000560">
    <property type="component" value="Chromosome II"/>
</dbReference>
<dbReference type="GO" id="GO:0005576">
    <property type="term" value="C:extracellular region"/>
    <property type="evidence" value="ECO:0007669"/>
    <property type="project" value="UniProtKB-SubCell"/>
</dbReference>
<dbReference type="GO" id="GO:0008422">
    <property type="term" value="F:beta-glucosidase activity"/>
    <property type="evidence" value="ECO:0000318"/>
    <property type="project" value="GO_Central"/>
</dbReference>
<dbReference type="GO" id="GO:0030245">
    <property type="term" value="P:cellulose catabolic process"/>
    <property type="evidence" value="ECO:0007669"/>
    <property type="project" value="UniProtKB-UniPathway"/>
</dbReference>
<dbReference type="GO" id="GO:0009251">
    <property type="term" value="P:glucan catabolic process"/>
    <property type="evidence" value="ECO:0000318"/>
    <property type="project" value="GO_Central"/>
</dbReference>
<dbReference type="FunFam" id="3.20.20.300:FF:000006">
    <property type="entry name" value="Beta-glucosidase H"/>
    <property type="match status" value="1"/>
</dbReference>
<dbReference type="FunFam" id="2.60.120.260:FF:000119">
    <property type="entry name" value="Probable beta-glucosidase I"/>
    <property type="match status" value="1"/>
</dbReference>
<dbReference type="Gene3D" id="2.60.120.260">
    <property type="entry name" value="Galactose-binding domain-like"/>
    <property type="match status" value="1"/>
</dbReference>
<dbReference type="Gene3D" id="3.40.50.1700">
    <property type="entry name" value="Glycoside hydrolase family 3 C-terminal domain"/>
    <property type="match status" value="1"/>
</dbReference>
<dbReference type="Gene3D" id="3.20.20.300">
    <property type="entry name" value="Glycoside hydrolase, family 3, N-terminal domain"/>
    <property type="match status" value="1"/>
</dbReference>
<dbReference type="Gene3D" id="2.60.40.10">
    <property type="entry name" value="Immunoglobulins"/>
    <property type="match status" value="1"/>
</dbReference>
<dbReference type="InterPro" id="IPR050288">
    <property type="entry name" value="Cellulose_deg_GH3"/>
</dbReference>
<dbReference type="InterPro" id="IPR026891">
    <property type="entry name" value="Fn3-like"/>
</dbReference>
<dbReference type="InterPro" id="IPR019800">
    <property type="entry name" value="Glyco_hydro_3_AS"/>
</dbReference>
<dbReference type="InterPro" id="IPR002772">
    <property type="entry name" value="Glyco_hydro_3_C"/>
</dbReference>
<dbReference type="InterPro" id="IPR036881">
    <property type="entry name" value="Glyco_hydro_3_C_sf"/>
</dbReference>
<dbReference type="InterPro" id="IPR001764">
    <property type="entry name" value="Glyco_hydro_3_N"/>
</dbReference>
<dbReference type="InterPro" id="IPR036962">
    <property type="entry name" value="Glyco_hydro_3_N_sf"/>
</dbReference>
<dbReference type="InterPro" id="IPR017853">
    <property type="entry name" value="Glycoside_hydrolase_SF"/>
</dbReference>
<dbReference type="InterPro" id="IPR013783">
    <property type="entry name" value="Ig-like_fold"/>
</dbReference>
<dbReference type="InterPro" id="IPR037524">
    <property type="entry name" value="PA14/GLEYA"/>
</dbReference>
<dbReference type="InterPro" id="IPR011658">
    <property type="entry name" value="PA14_dom"/>
</dbReference>
<dbReference type="PANTHER" id="PTHR42715">
    <property type="entry name" value="BETA-GLUCOSIDASE"/>
    <property type="match status" value="1"/>
</dbReference>
<dbReference type="PANTHER" id="PTHR42715:SF16">
    <property type="entry name" value="BETA-GLUCOSIDASE J-RELATED"/>
    <property type="match status" value="1"/>
</dbReference>
<dbReference type="Pfam" id="PF14310">
    <property type="entry name" value="Fn3-like"/>
    <property type="match status" value="1"/>
</dbReference>
<dbReference type="Pfam" id="PF00933">
    <property type="entry name" value="Glyco_hydro_3"/>
    <property type="match status" value="1"/>
</dbReference>
<dbReference type="Pfam" id="PF01915">
    <property type="entry name" value="Glyco_hydro_3_C"/>
    <property type="match status" value="1"/>
</dbReference>
<dbReference type="Pfam" id="PF07691">
    <property type="entry name" value="PA14"/>
    <property type="match status" value="1"/>
</dbReference>
<dbReference type="PRINTS" id="PR00133">
    <property type="entry name" value="GLHYDRLASE3"/>
</dbReference>
<dbReference type="SMART" id="SM01217">
    <property type="entry name" value="Fn3_like"/>
    <property type="match status" value="1"/>
</dbReference>
<dbReference type="SMART" id="SM00758">
    <property type="entry name" value="PA14"/>
    <property type="match status" value="1"/>
</dbReference>
<dbReference type="SUPFAM" id="SSF51445">
    <property type="entry name" value="(Trans)glycosidases"/>
    <property type="match status" value="1"/>
</dbReference>
<dbReference type="SUPFAM" id="SSF52279">
    <property type="entry name" value="Beta-D-glucan exohydrolase, C-terminal domain"/>
    <property type="match status" value="1"/>
</dbReference>
<dbReference type="PROSITE" id="PS00775">
    <property type="entry name" value="GLYCOSYL_HYDROL_F3"/>
    <property type="match status" value="1"/>
</dbReference>
<dbReference type="PROSITE" id="PS51820">
    <property type="entry name" value="PA14"/>
    <property type="match status" value="1"/>
</dbReference>
<gene>
    <name type="primary">bglJ</name>
    <name type="ORF">AN7865</name>
</gene>